<accession>Q81FQ8</accession>
<name>GCH1_BACCR</name>
<organism>
    <name type="scientific">Bacillus cereus (strain ATCC 14579 / DSM 31 / CCUG 7414 / JCM 2152 / NBRC 15305 / NCIMB 9373 / NCTC 2599 / NRRL B-3711)</name>
    <dbReference type="NCBI Taxonomy" id="226900"/>
    <lineage>
        <taxon>Bacteria</taxon>
        <taxon>Bacillati</taxon>
        <taxon>Bacillota</taxon>
        <taxon>Bacilli</taxon>
        <taxon>Bacillales</taxon>
        <taxon>Bacillaceae</taxon>
        <taxon>Bacillus</taxon>
        <taxon>Bacillus cereus group</taxon>
    </lineage>
</organism>
<feature type="chain" id="PRO_0000119383" description="GTP cyclohydrolase 1">
    <location>
        <begin position="1"/>
        <end position="189"/>
    </location>
</feature>
<feature type="binding site" evidence="2">
    <location>
        <position position="78"/>
    </location>
    <ligand>
        <name>Zn(2+)</name>
        <dbReference type="ChEBI" id="CHEBI:29105"/>
    </ligand>
</feature>
<feature type="binding site" evidence="2">
    <location>
        <position position="81"/>
    </location>
    <ligand>
        <name>Zn(2+)</name>
        <dbReference type="ChEBI" id="CHEBI:29105"/>
    </ligand>
</feature>
<feature type="binding site" evidence="2">
    <location>
        <position position="150"/>
    </location>
    <ligand>
        <name>Zn(2+)</name>
        <dbReference type="ChEBI" id="CHEBI:29105"/>
    </ligand>
</feature>
<protein>
    <recommendedName>
        <fullName evidence="2">GTP cyclohydrolase 1</fullName>
        <ecNumber evidence="2">3.5.4.16</ecNumber>
    </recommendedName>
    <alternativeName>
        <fullName evidence="2">GTP cyclohydrolase I</fullName>
        <shortName evidence="2">GTP-CH-I</shortName>
    </alternativeName>
</protein>
<proteinExistence type="inferred from homology"/>
<evidence type="ECO:0000250" key="1"/>
<evidence type="ECO:0000255" key="2">
    <source>
        <dbReference type="HAMAP-Rule" id="MF_00223"/>
    </source>
</evidence>
<gene>
    <name evidence="2" type="primary">folE</name>
    <name type="ordered locus">BC_1511</name>
</gene>
<sequence length="189" mass="21020">MAKVNLEQIEHAVRLILEAIGDDPNREGVLDTPKRVAKMYAEVFSGMHEDPKEHLHKVFGEDHEELVLVKDIPFYSMCEHHLVPFYGVAHVAYIPQGGKVTGLSKLARTVDTIARRPQLQERITSTVANSIMEVLEPHGVMVVVEAEHMCMTMRGVKKPGAKTVTTAVRGVLENDAAARSEILSFIKTK</sequence>
<keyword id="KW-0342">GTP-binding</keyword>
<keyword id="KW-0378">Hydrolase</keyword>
<keyword id="KW-0479">Metal-binding</keyword>
<keyword id="KW-0547">Nucleotide-binding</keyword>
<keyword id="KW-0554">One-carbon metabolism</keyword>
<keyword id="KW-1185">Reference proteome</keyword>
<keyword id="KW-0862">Zinc</keyword>
<dbReference type="EC" id="3.5.4.16" evidence="2"/>
<dbReference type="EMBL" id="AE016877">
    <property type="protein sequence ID" value="AAP08491.1"/>
    <property type="molecule type" value="Genomic_DNA"/>
</dbReference>
<dbReference type="RefSeq" id="NP_831290.1">
    <property type="nucleotide sequence ID" value="NC_004722.1"/>
</dbReference>
<dbReference type="RefSeq" id="WP_001151482.1">
    <property type="nucleotide sequence ID" value="NZ_CP138336.1"/>
</dbReference>
<dbReference type="SMR" id="Q81FQ8"/>
<dbReference type="STRING" id="226900.BC_1511"/>
<dbReference type="GeneID" id="93009529"/>
<dbReference type="KEGG" id="bce:BC1511"/>
<dbReference type="PATRIC" id="fig|226900.8.peg.1488"/>
<dbReference type="HOGENOM" id="CLU_049768_3_3_9"/>
<dbReference type="OrthoDB" id="9801207at2"/>
<dbReference type="UniPathway" id="UPA00848">
    <property type="reaction ID" value="UER00151"/>
</dbReference>
<dbReference type="Proteomes" id="UP000001417">
    <property type="component" value="Chromosome"/>
</dbReference>
<dbReference type="GO" id="GO:0005737">
    <property type="term" value="C:cytoplasm"/>
    <property type="evidence" value="ECO:0000318"/>
    <property type="project" value="GO_Central"/>
</dbReference>
<dbReference type="GO" id="GO:0005525">
    <property type="term" value="F:GTP binding"/>
    <property type="evidence" value="ECO:0000318"/>
    <property type="project" value="GO_Central"/>
</dbReference>
<dbReference type="GO" id="GO:0003934">
    <property type="term" value="F:GTP cyclohydrolase I activity"/>
    <property type="evidence" value="ECO:0000318"/>
    <property type="project" value="GO_Central"/>
</dbReference>
<dbReference type="GO" id="GO:0008270">
    <property type="term" value="F:zinc ion binding"/>
    <property type="evidence" value="ECO:0000318"/>
    <property type="project" value="GO_Central"/>
</dbReference>
<dbReference type="GO" id="GO:0006730">
    <property type="term" value="P:one-carbon metabolic process"/>
    <property type="evidence" value="ECO:0007669"/>
    <property type="project" value="UniProtKB-UniRule"/>
</dbReference>
<dbReference type="GO" id="GO:0006729">
    <property type="term" value="P:tetrahydrobiopterin biosynthetic process"/>
    <property type="evidence" value="ECO:0000318"/>
    <property type="project" value="GO_Central"/>
</dbReference>
<dbReference type="GO" id="GO:0046654">
    <property type="term" value="P:tetrahydrofolate biosynthetic process"/>
    <property type="evidence" value="ECO:0007669"/>
    <property type="project" value="UniProtKB-UniRule"/>
</dbReference>
<dbReference type="CDD" id="cd00642">
    <property type="entry name" value="GTP_cyclohydro1"/>
    <property type="match status" value="1"/>
</dbReference>
<dbReference type="FunFam" id="1.10.286.10:FF:000001">
    <property type="entry name" value="GTP cyclohydrolase 1"/>
    <property type="match status" value="1"/>
</dbReference>
<dbReference type="FunFam" id="3.30.1130.10:FF:000001">
    <property type="entry name" value="GTP cyclohydrolase 1"/>
    <property type="match status" value="1"/>
</dbReference>
<dbReference type="Gene3D" id="1.10.286.10">
    <property type="match status" value="1"/>
</dbReference>
<dbReference type="Gene3D" id="3.30.1130.10">
    <property type="match status" value="1"/>
</dbReference>
<dbReference type="HAMAP" id="MF_00223">
    <property type="entry name" value="FolE"/>
    <property type="match status" value="1"/>
</dbReference>
<dbReference type="InterPro" id="IPR043133">
    <property type="entry name" value="GTP-CH-I_C/QueF"/>
</dbReference>
<dbReference type="InterPro" id="IPR043134">
    <property type="entry name" value="GTP-CH-I_N"/>
</dbReference>
<dbReference type="InterPro" id="IPR001474">
    <property type="entry name" value="GTP_CycHdrlase_I"/>
</dbReference>
<dbReference type="InterPro" id="IPR018234">
    <property type="entry name" value="GTP_CycHdrlase_I_CS"/>
</dbReference>
<dbReference type="InterPro" id="IPR020602">
    <property type="entry name" value="GTP_CycHdrlase_I_dom"/>
</dbReference>
<dbReference type="NCBIfam" id="TIGR00063">
    <property type="entry name" value="folE"/>
    <property type="match status" value="1"/>
</dbReference>
<dbReference type="NCBIfam" id="NF006825">
    <property type="entry name" value="PRK09347.1-2"/>
    <property type="match status" value="1"/>
</dbReference>
<dbReference type="NCBIfam" id="NF006826">
    <property type="entry name" value="PRK09347.1-3"/>
    <property type="match status" value="1"/>
</dbReference>
<dbReference type="PANTHER" id="PTHR11109:SF7">
    <property type="entry name" value="GTP CYCLOHYDROLASE 1"/>
    <property type="match status" value="1"/>
</dbReference>
<dbReference type="PANTHER" id="PTHR11109">
    <property type="entry name" value="GTP CYCLOHYDROLASE I"/>
    <property type="match status" value="1"/>
</dbReference>
<dbReference type="Pfam" id="PF01227">
    <property type="entry name" value="GTP_cyclohydroI"/>
    <property type="match status" value="1"/>
</dbReference>
<dbReference type="SUPFAM" id="SSF55620">
    <property type="entry name" value="Tetrahydrobiopterin biosynthesis enzymes-like"/>
    <property type="match status" value="1"/>
</dbReference>
<dbReference type="PROSITE" id="PS00859">
    <property type="entry name" value="GTP_CYCLOHYDROL_1_1"/>
    <property type="match status" value="1"/>
</dbReference>
<dbReference type="PROSITE" id="PS00860">
    <property type="entry name" value="GTP_CYCLOHYDROL_1_2"/>
    <property type="match status" value="1"/>
</dbReference>
<comment type="catalytic activity">
    <reaction evidence="2">
        <text>GTP + H2O = 7,8-dihydroneopterin 3'-triphosphate + formate + H(+)</text>
        <dbReference type="Rhea" id="RHEA:17473"/>
        <dbReference type="ChEBI" id="CHEBI:15377"/>
        <dbReference type="ChEBI" id="CHEBI:15378"/>
        <dbReference type="ChEBI" id="CHEBI:15740"/>
        <dbReference type="ChEBI" id="CHEBI:37565"/>
        <dbReference type="ChEBI" id="CHEBI:58462"/>
        <dbReference type="EC" id="3.5.4.16"/>
    </reaction>
</comment>
<comment type="pathway">
    <text evidence="2">Cofactor biosynthesis; 7,8-dihydroneopterin triphosphate biosynthesis; 7,8-dihydroneopterin triphosphate from GTP: step 1/1.</text>
</comment>
<comment type="subunit">
    <text evidence="1">Toroid-shaped homodecamer, composed of two pentamers of five dimers.</text>
</comment>
<comment type="similarity">
    <text evidence="2">Belongs to the GTP cyclohydrolase I family.</text>
</comment>
<reference key="1">
    <citation type="journal article" date="2003" name="Nature">
        <title>Genome sequence of Bacillus cereus and comparative analysis with Bacillus anthracis.</title>
        <authorList>
            <person name="Ivanova N."/>
            <person name="Sorokin A."/>
            <person name="Anderson I."/>
            <person name="Galleron N."/>
            <person name="Candelon B."/>
            <person name="Kapatral V."/>
            <person name="Bhattacharyya A."/>
            <person name="Reznik G."/>
            <person name="Mikhailova N."/>
            <person name="Lapidus A."/>
            <person name="Chu L."/>
            <person name="Mazur M."/>
            <person name="Goltsman E."/>
            <person name="Larsen N."/>
            <person name="D'Souza M."/>
            <person name="Walunas T."/>
            <person name="Grechkin Y."/>
            <person name="Pusch G."/>
            <person name="Haselkorn R."/>
            <person name="Fonstein M."/>
            <person name="Ehrlich S.D."/>
            <person name="Overbeek R."/>
            <person name="Kyrpides N.C."/>
        </authorList>
    </citation>
    <scope>NUCLEOTIDE SEQUENCE [LARGE SCALE GENOMIC DNA]</scope>
    <source>
        <strain>ATCC 14579 / DSM 31 / CCUG 7414 / JCM 2152 / NBRC 15305 / NCIMB 9373 / NCTC 2599 / NRRL B-3711</strain>
    </source>
</reference>